<sequence length="285" mass="32686">MFKNYIEITKPGIIIGNSTLITGGFLFASRHAAFNYVLFIYTILGASLVIASACVFNNLIDIDIDKKMKRTSNRVLSKKLLPVFSVFNFAIFLGVLGLSILGCLVNFISMSLAVFGFFIYVVLYTMFYKRRSFYSTFIGSFSGSTPSVIGYTAVSNTIDICSILLFVIVIFWQMSHFYSISIMRIKDYREAKIPVFSVVKGVAITKKHIFFYVLNFSFFSSLFTFLGYLSYNFLLLSSIVNFYWSFLSYSNIKKNNDKKNARKLFYFSIIVIVFFNFLISIDVFF</sequence>
<dbReference type="EC" id="2.5.1.141" evidence="1"/>
<dbReference type="EMBL" id="CP001161">
    <property type="protein sequence ID" value="ACL30816.1"/>
    <property type="molecule type" value="Genomic_DNA"/>
</dbReference>
<dbReference type="RefSeq" id="WP_009874420.1">
    <property type="nucleotide sequence ID" value="NC_011833.1"/>
</dbReference>
<dbReference type="SMR" id="B8D9P5"/>
<dbReference type="KEGG" id="bap:BUAP5A_461"/>
<dbReference type="HOGENOM" id="CLU_029631_0_0_6"/>
<dbReference type="OrthoDB" id="9814417at2"/>
<dbReference type="UniPathway" id="UPA00834">
    <property type="reaction ID" value="UER00712"/>
</dbReference>
<dbReference type="Proteomes" id="UP000006904">
    <property type="component" value="Chromosome"/>
</dbReference>
<dbReference type="GO" id="GO:0005886">
    <property type="term" value="C:plasma membrane"/>
    <property type="evidence" value="ECO:0007669"/>
    <property type="project" value="UniProtKB-SubCell"/>
</dbReference>
<dbReference type="GO" id="GO:0008495">
    <property type="term" value="F:protoheme IX farnesyltransferase activity"/>
    <property type="evidence" value="ECO:0007669"/>
    <property type="project" value="UniProtKB-UniRule"/>
</dbReference>
<dbReference type="GO" id="GO:0048034">
    <property type="term" value="P:heme O biosynthetic process"/>
    <property type="evidence" value="ECO:0007669"/>
    <property type="project" value="UniProtKB-UniRule"/>
</dbReference>
<dbReference type="CDD" id="cd13957">
    <property type="entry name" value="PT_UbiA_Cox10"/>
    <property type="match status" value="1"/>
</dbReference>
<dbReference type="Gene3D" id="1.10.357.140">
    <property type="entry name" value="UbiA prenyltransferase"/>
    <property type="match status" value="1"/>
</dbReference>
<dbReference type="HAMAP" id="MF_00154">
    <property type="entry name" value="CyoE_CtaB"/>
    <property type="match status" value="1"/>
</dbReference>
<dbReference type="InterPro" id="IPR006369">
    <property type="entry name" value="Protohaem_IX_farnesylTrfase"/>
</dbReference>
<dbReference type="InterPro" id="IPR000537">
    <property type="entry name" value="UbiA_prenyltransferase"/>
</dbReference>
<dbReference type="InterPro" id="IPR030470">
    <property type="entry name" value="UbiA_prenylTrfase_CS"/>
</dbReference>
<dbReference type="InterPro" id="IPR044878">
    <property type="entry name" value="UbiA_sf"/>
</dbReference>
<dbReference type="NCBIfam" id="TIGR01473">
    <property type="entry name" value="cyoE_ctaB"/>
    <property type="match status" value="1"/>
</dbReference>
<dbReference type="NCBIfam" id="NF003348">
    <property type="entry name" value="PRK04375.1-1"/>
    <property type="match status" value="1"/>
</dbReference>
<dbReference type="PANTHER" id="PTHR43448">
    <property type="entry name" value="PROTOHEME IX FARNESYLTRANSFERASE, MITOCHONDRIAL"/>
    <property type="match status" value="1"/>
</dbReference>
<dbReference type="PANTHER" id="PTHR43448:SF2">
    <property type="entry name" value="PROTOHEME IX FARNESYLTRANSFERASE, MITOCHONDRIAL"/>
    <property type="match status" value="1"/>
</dbReference>
<dbReference type="Pfam" id="PF01040">
    <property type="entry name" value="UbiA"/>
    <property type="match status" value="1"/>
</dbReference>
<dbReference type="PROSITE" id="PS00943">
    <property type="entry name" value="UBIA"/>
    <property type="match status" value="1"/>
</dbReference>
<protein>
    <recommendedName>
        <fullName evidence="1">Protoheme IX farnesyltransferase</fullName>
        <ecNumber evidence="1">2.5.1.141</ecNumber>
    </recommendedName>
    <alternativeName>
        <fullName evidence="1">Heme B farnesyltransferase</fullName>
    </alternativeName>
    <alternativeName>
        <fullName evidence="1">Heme O synthase</fullName>
    </alternativeName>
</protein>
<accession>B8D9P5</accession>
<name>CYOE_BUCA5</name>
<reference key="1">
    <citation type="journal article" date="2009" name="Science">
        <title>The dynamics and time scale of ongoing genomic erosion in symbiotic bacteria.</title>
        <authorList>
            <person name="Moran N.A."/>
            <person name="McLaughlin H.J."/>
            <person name="Sorek R."/>
        </authorList>
    </citation>
    <scope>NUCLEOTIDE SEQUENCE [LARGE SCALE GENOMIC DNA]</scope>
    <source>
        <strain>5A</strain>
    </source>
</reference>
<gene>
    <name evidence="1" type="primary">cyoE</name>
    <name type="ordered locus">BUAP5A_461</name>
</gene>
<organism>
    <name type="scientific">Buchnera aphidicola subsp. Acyrthosiphon pisum (strain 5A)</name>
    <dbReference type="NCBI Taxonomy" id="563178"/>
    <lineage>
        <taxon>Bacteria</taxon>
        <taxon>Pseudomonadati</taxon>
        <taxon>Pseudomonadota</taxon>
        <taxon>Gammaproteobacteria</taxon>
        <taxon>Enterobacterales</taxon>
        <taxon>Erwiniaceae</taxon>
        <taxon>Buchnera</taxon>
    </lineage>
</organism>
<proteinExistence type="inferred from homology"/>
<evidence type="ECO:0000255" key="1">
    <source>
        <dbReference type="HAMAP-Rule" id="MF_00154"/>
    </source>
</evidence>
<comment type="function">
    <text evidence="1">Converts heme B (protoheme IX) to heme O by substitution of the vinyl group on carbon 2 of heme B porphyrin ring with a hydroxyethyl farnesyl side group.</text>
</comment>
<comment type="catalytic activity">
    <reaction evidence="1">
        <text>heme b + (2E,6E)-farnesyl diphosphate + H2O = Fe(II)-heme o + diphosphate</text>
        <dbReference type="Rhea" id="RHEA:28070"/>
        <dbReference type="ChEBI" id="CHEBI:15377"/>
        <dbReference type="ChEBI" id="CHEBI:33019"/>
        <dbReference type="ChEBI" id="CHEBI:60344"/>
        <dbReference type="ChEBI" id="CHEBI:60530"/>
        <dbReference type="ChEBI" id="CHEBI:175763"/>
        <dbReference type="EC" id="2.5.1.141"/>
    </reaction>
</comment>
<comment type="pathway">
    <text evidence="1">Porphyrin-containing compound metabolism; heme O biosynthesis; heme O from protoheme: step 1/1.</text>
</comment>
<comment type="subcellular location">
    <subcellularLocation>
        <location evidence="1">Cell membrane</location>
        <topology evidence="1">Multi-pass membrane protein</topology>
    </subcellularLocation>
</comment>
<comment type="miscellaneous">
    <text evidence="1">Carbon 2 of the heme B porphyrin ring is defined according to the Fischer nomenclature.</text>
</comment>
<comment type="similarity">
    <text evidence="1">Belongs to the UbiA prenyltransferase family. Protoheme IX farnesyltransferase subfamily.</text>
</comment>
<keyword id="KW-1003">Cell membrane</keyword>
<keyword id="KW-0350">Heme biosynthesis</keyword>
<keyword id="KW-0472">Membrane</keyword>
<keyword id="KW-0808">Transferase</keyword>
<keyword id="KW-0812">Transmembrane</keyword>
<keyword id="KW-1133">Transmembrane helix</keyword>
<feature type="chain" id="PRO_1000199646" description="Protoheme IX farnesyltransferase">
    <location>
        <begin position="1"/>
        <end position="285"/>
    </location>
</feature>
<feature type="transmembrane region" description="Helical" evidence="1">
    <location>
        <begin position="8"/>
        <end position="28"/>
    </location>
</feature>
<feature type="transmembrane region" description="Helical" evidence="1">
    <location>
        <begin position="36"/>
        <end position="56"/>
    </location>
</feature>
<feature type="transmembrane region" description="Helical" evidence="1">
    <location>
        <begin position="80"/>
        <end position="100"/>
    </location>
</feature>
<feature type="transmembrane region" description="Helical" evidence="1">
    <location>
        <begin position="107"/>
        <end position="127"/>
    </location>
</feature>
<feature type="transmembrane region" description="Helical" evidence="1">
    <location>
        <begin position="133"/>
        <end position="153"/>
    </location>
</feature>
<feature type="transmembrane region" description="Helical" evidence="1">
    <location>
        <begin position="163"/>
        <end position="183"/>
    </location>
</feature>
<feature type="transmembrane region" description="Helical" evidence="1">
    <location>
        <begin position="209"/>
        <end position="229"/>
    </location>
</feature>
<feature type="transmembrane region" description="Helical" evidence="1">
    <location>
        <begin position="232"/>
        <end position="252"/>
    </location>
</feature>
<feature type="transmembrane region" description="Helical" evidence="1">
    <location>
        <begin position="265"/>
        <end position="285"/>
    </location>
</feature>